<reference key="1">
    <citation type="journal article" date="2004" name="Nature">
        <title>Genome evolution in yeasts.</title>
        <authorList>
            <person name="Dujon B."/>
            <person name="Sherman D."/>
            <person name="Fischer G."/>
            <person name="Durrens P."/>
            <person name="Casaregola S."/>
            <person name="Lafontaine I."/>
            <person name="de Montigny J."/>
            <person name="Marck C."/>
            <person name="Neuveglise C."/>
            <person name="Talla E."/>
            <person name="Goffard N."/>
            <person name="Frangeul L."/>
            <person name="Aigle M."/>
            <person name="Anthouard V."/>
            <person name="Babour A."/>
            <person name="Barbe V."/>
            <person name="Barnay S."/>
            <person name="Blanchin S."/>
            <person name="Beckerich J.-M."/>
            <person name="Beyne E."/>
            <person name="Bleykasten C."/>
            <person name="Boisrame A."/>
            <person name="Boyer J."/>
            <person name="Cattolico L."/>
            <person name="Confanioleri F."/>
            <person name="de Daruvar A."/>
            <person name="Despons L."/>
            <person name="Fabre E."/>
            <person name="Fairhead C."/>
            <person name="Ferry-Dumazet H."/>
            <person name="Groppi A."/>
            <person name="Hantraye F."/>
            <person name="Hennequin C."/>
            <person name="Jauniaux N."/>
            <person name="Joyet P."/>
            <person name="Kachouri R."/>
            <person name="Kerrest A."/>
            <person name="Koszul R."/>
            <person name="Lemaire M."/>
            <person name="Lesur I."/>
            <person name="Ma L."/>
            <person name="Muller H."/>
            <person name="Nicaud J.-M."/>
            <person name="Nikolski M."/>
            <person name="Oztas S."/>
            <person name="Ozier-Kalogeropoulos O."/>
            <person name="Pellenz S."/>
            <person name="Potier S."/>
            <person name="Richard G.-F."/>
            <person name="Straub M.-L."/>
            <person name="Suleau A."/>
            <person name="Swennen D."/>
            <person name="Tekaia F."/>
            <person name="Wesolowski-Louvel M."/>
            <person name="Westhof E."/>
            <person name="Wirth B."/>
            <person name="Zeniou-Meyer M."/>
            <person name="Zivanovic Y."/>
            <person name="Bolotin-Fukuhara M."/>
            <person name="Thierry A."/>
            <person name="Bouchier C."/>
            <person name="Caudron B."/>
            <person name="Scarpelli C."/>
            <person name="Gaillardin C."/>
            <person name="Weissenbach J."/>
            <person name="Wincker P."/>
            <person name="Souciet J.-L."/>
        </authorList>
    </citation>
    <scope>NUCLEOTIDE SEQUENCE [LARGE SCALE GENOMIC DNA]</scope>
    <source>
        <strain>ATCC 2001 / BCRC 20586 / JCM 3761 / NBRC 0622 / NRRL Y-65 / CBS 138</strain>
    </source>
</reference>
<gene>
    <name type="primary">SIP5</name>
    <name type="ordered locus">CAGL0I00836g</name>
</gene>
<comment type="function">
    <text evidence="1">May negatively regulate the SNF1 kinase.</text>
</comment>
<comment type="subcellular location">
    <subcellularLocation>
        <location evidence="1">Cytoplasm</location>
    </subcellularLocation>
</comment>
<comment type="similarity">
    <text evidence="3">Belongs to the SIP5 family.</text>
</comment>
<feature type="chain" id="PRO_0000333433" description="Protein SIP5">
    <location>
        <begin position="1"/>
        <end position="469"/>
    </location>
</feature>
<feature type="region of interest" description="Disordered" evidence="2">
    <location>
        <begin position="1"/>
        <end position="86"/>
    </location>
</feature>
<feature type="region of interest" description="Disordered" evidence="2">
    <location>
        <begin position="301"/>
        <end position="321"/>
    </location>
</feature>
<feature type="region of interest" description="Disordered" evidence="2">
    <location>
        <begin position="414"/>
        <end position="441"/>
    </location>
</feature>
<feature type="compositionally biased region" description="Polar residues" evidence="2">
    <location>
        <begin position="11"/>
        <end position="28"/>
    </location>
</feature>
<feature type="compositionally biased region" description="Polar residues" evidence="2">
    <location>
        <begin position="50"/>
        <end position="67"/>
    </location>
</feature>
<feature type="compositionally biased region" description="Basic and acidic residues" evidence="2">
    <location>
        <begin position="301"/>
        <end position="320"/>
    </location>
</feature>
<feature type="compositionally biased region" description="Polar residues" evidence="2">
    <location>
        <begin position="431"/>
        <end position="441"/>
    </location>
</feature>
<organism>
    <name type="scientific">Candida glabrata (strain ATCC 2001 / BCRC 20586 / JCM 3761 / NBRC 0622 / NRRL Y-65 / CBS 138)</name>
    <name type="common">Yeast</name>
    <name type="synonym">Nakaseomyces glabratus</name>
    <dbReference type="NCBI Taxonomy" id="284593"/>
    <lineage>
        <taxon>Eukaryota</taxon>
        <taxon>Fungi</taxon>
        <taxon>Dikarya</taxon>
        <taxon>Ascomycota</taxon>
        <taxon>Saccharomycotina</taxon>
        <taxon>Saccharomycetes</taxon>
        <taxon>Saccharomycetales</taxon>
        <taxon>Saccharomycetaceae</taxon>
        <taxon>Nakaseomyces</taxon>
    </lineage>
</organism>
<accession>Q6FR54</accession>
<dbReference type="EMBL" id="CR380955">
    <property type="protein sequence ID" value="CAG60227.1"/>
    <property type="molecule type" value="Genomic_DNA"/>
</dbReference>
<dbReference type="RefSeq" id="XP_447290.1">
    <property type="nucleotide sequence ID" value="XM_447290.1"/>
</dbReference>
<dbReference type="FunCoup" id="Q6FR54">
    <property type="interactions" value="67"/>
</dbReference>
<dbReference type="STRING" id="284593.Q6FR54"/>
<dbReference type="EnsemblFungi" id="CAGL0I00836g-T">
    <property type="protein sequence ID" value="CAGL0I00836g-T-p1"/>
    <property type="gene ID" value="CAGL0I00836g"/>
</dbReference>
<dbReference type="KEGG" id="cgr:2889040"/>
<dbReference type="CGD" id="CAL0132070">
    <property type="gene designation" value="CAGL0I00836g"/>
</dbReference>
<dbReference type="VEuPathDB" id="FungiDB:CAGL0I00836g"/>
<dbReference type="eggNOG" id="KOG2789">
    <property type="taxonomic scope" value="Eukaryota"/>
</dbReference>
<dbReference type="HOGENOM" id="CLU_009068_2_0_1"/>
<dbReference type="InParanoid" id="Q6FR54"/>
<dbReference type="OMA" id="ISEPANC"/>
<dbReference type="Proteomes" id="UP000002428">
    <property type="component" value="Chromosome I"/>
</dbReference>
<dbReference type="GO" id="GO:0005737">
    <property type="term" value="C:cytoplasm"/>
    <property type="evidence" value="ECO:0007669"/>
    <property type="project" value="UniProtKB-SubCell"/>
</dbReference>
<dbReference type="GO" id="GO:0042149">
    <property type="term" value="P:cellular response to glucose starvation"/>
    <property type="evidence" value="ECO:0007669"/>
    <property type="project" value="EnsemblFungi"/>
</dbReference>
<dbReference type="CDD" id="cd24139">
    <property type="entry name" value="SIP5-like"/>
    <property type="match status" value="1"/>
</dbReference>
<dbReference type="InterPro" id="IPR039301">
    <property type="entry name" value="Sip5/DA2"/>
</dbReference>
<dbReference type="PANTHER" id="PTHR31315">
    <property type="entry name" value="PROTEIN SIP5"/>
    <property type="match status" value="1"/>
</dbReference>
<dbReference type="PANTHER" id="PTHR31315:SF1">
    <property type="entry name" value="PROTEIN SIP5"/>
    <property type="match status" value="1"/>
</dbReference>
<sequence>MGNVPAKLDQDASSYTGRSTYTDSSSASGVGAFRGAGGTMDETRARGRRTSSLVGNILNGPTSSRNDPTGEVSKKQLSAAKKRGTKERELLKEENAKKLVIKYNETVDGGYLAPHGCYSLDKMDYDSDIVRKLIIERKLAPFYIPLQDFDDSWTKDEVKKIVDALPLHAPFNEHVEEYEDVPVGDLNEPHFDYLIDKKLSKKEQKKMHALIFKARLYRKRLRWQESENNAYLEEKLQNRDNDIPKNSFLPNDDLKYDLYAQGSECPICFLYLPMPLNYSKCCQQPICSECFVQIKRSEPHFPHDEVDPSQPQKDENEKDPNLLISEPANCPYCATPNFSITYTPPTGRKVGIGGQAPNLYKPLGTAGNAPPTYTVSSDDIRPDWETKLNKERVRLARRSANATAIHVSNRLIGPQRTGSFANEDSPGVAGSTDSRSAGVANSTLEELEKQMIDEAIRLSLQDEKRKAKR</sequence>
<protein>
    <recommendedName>
        <fullName>Protein SIP5</fullName>
    </recommendedName>
</protein>
<evidence type="ECO:0000250" key="1"/>
<evidence type="ECO:0000256" key="2">
    <source>
        <dbReference type="SAM" id="MobiDB-lite"/>
    </source>
</evidence>
<evidence type="ECO:0000305" key="3"/>
<proteinExistence type="inferred from homology"/>
<keyword id="KW-0963">Cytoplasm</keyword>
<keyword id="KW-1185">Reference proteome</keyword>
<name>SIP5_CANGA</name>